<reference key="1">
    <citation type="journal article" date="2004" name="Nature">
        <title>Genome sequence of the Brown Norway rat yields insights into mammalian evolution.</title>
        <authorList>
            <person name="Gibbs R.A."/>
            <person name="Weinstock G.M."/>
            <person name="Metzker M.L."/>
            <person name="Muzny D.M."/>
            <person name="Sodergren E.J."/>
            <person name="Scherer S."/>
            <person name="Scott G."/>
            <person name="Steffen D."/>
            <person name="Worley K.C."/>
            <person name="Burch P.E."/>
            <person name="Okwuonu G."/>
            <person name="Hines S."/>
            <person name="Lewis L."/>
            <person name="Deramo C."/>
            <person name="Delgado O."/>
            <person name="Dugan-Rocha S."/>
            <person name="Miner G."/>
            <person name="Morgan M."/>
            <person name="Hawes A."/>
            <person name="Gill R."/>
            <person name="Holt R.A."/>
            <person name="Adams M.D."/>
            <person name="Amanatides P.G."/>
            <person name="Baden-Tillson H."/>
            <person name="Barnstead M."/>
            <person name="Chin S."/>
            <person name="Evans C.A."/>
            <person name="Ferriera S."/>
            <person name="Fosler C."/>
            <person name="Glodek A."/>
            <person name="Gu Z."/>
            <person name="Jennings D."/>
            <person name="Kraft C.L."/>
            <person name="Nguyen T."/>
            <person name="Pfannkoch C.M."/>
            <person name="Sitter C."/>
            <person name="Sutton G.G."/>
            <person name="Venter J.C."/>
            <person name="Woodage T."/>
            <person name="Smith D."/>
            <person name="Lee H.-M."/>
            <person name="Gustafson E."/>
            <person name="Cahill P."/>
            <person name="Kana A."/>
            <person name="Doucette-Stamm L."/>
            <person name="Weinstock K."/>
            <person name="Fechtel K."/>
            <person name="Weiss R.B."/>
            <person name="Dunn D.M."/>
            <person name="Green E.D."/>
            <person name="Blakesley R.W."/>
            <person name="Bouffard G.G."/>
            <person name="De Jong P.J."/>
            <person name="Osoegawa K."/>
            <person name="Zhu B."/>
            <person name="Marra M."/>
            <person name="Schein J."/>
            <person name="Bosdet I."/>
            <person name="Fjell C."/>
            <person name="Jones S."/>
            <person name="Krzywinski M."/>
            <person name="Mathewson C."/>
            <person name="Siddiqui A."/>
            <person name="Wye N."/>
            <person name="McPherson J."/>
            <person name="Zhao S."/>
            <person name="Fraser C.M."/>
            <person name="Shetty J."/>
            <person name="Shatsman S."/>
            <person name="Geer K."/>
            <person name="Chen Y."/>
            <person name="Abramzon S."/>
            <person name="Nierman W.C."/>
            <person name="Havlak P.H."/>
            <person name="Chen R."/>
            <person name="Durbin K.J."/>
            <person name="Egan A."/>
            <person name="Ren Y."/>
            <person name="Song X.-Z."/>
            <person name="Li B."/>
            <person name="Liu Y."/>
            <person name="Qin X."/>
            <person name="Cawley S."/>
            <person name="Cooney A.J."/>
            <person name="D'Souza L.M."/>
            <person name="Martin K."/>
            <person name="Wu J.Q."/>
            <person name="Gonzalez-Garay M.L."/>
            <person name="Jackson A.R."/>
            <person name="Kalafus K.J."/>
            <person name="McLeod M.P."/>
            <person name="Milosavljevic A."/>
            <person name="Virk D."/>
            <person name="Volkov A."/>
            <person name="Wheeler D.A."/>
            <person name="Zhang Z."/>
            <person name="Bailey J.A."/>
            <person name="Eichler E.E."/>
            <person name="Tuzun E."/>
            <person name="Birney E."/>
            <person name="Mongin E."/>
            <person name="Ureta-Vidal A."/>
            <person name="Woodwark C."/>
            <person name="Zdobnov E."/>
            <person name="Bork P."/>
            <person name="Suyama M."/>
            <person name="Torrents D."/>
            <person name="Alexandersson M."/>
            <person name="Trask B.J."/>
            <person name="Young J.M."/>
            <person name="Huang H."/>
            <person name="Wang H."/>
            <person name="Xing H."/>
            <person name="Daniels S."/>
            <person name="Gietzen D."/>
            <person name="Schmidt J."/>
            <person name="Stevens K."/>
            <person name="Vitt U."/>
            <person name="Wingrove J."/>
            <person name="Camara F."/>
            <person name="Mar Alba M."/>
            <person name="Abril J.F."/>
            <person name="Guigo R."/>
            <person name="Smit A."/>
            <person name="Dubchak I."/>
            <person name="Rubin E.M."/>
            <person name="Couronne O."/>
            <person name="Poliakov A."/>
            <person name="Huebner N."/>
            <person name="Ganten D."/>
            <person name="Goesele C."/>
            <person name="Hummel O."/>
            <person name="Kreitler T."/>
            <person name="Lee Y.-A."/>
            <person name="Monti J."/>
            <person name="Schulz H."/>
            <person name="Zimdahl H."/>
            <person name="Himmelbauer H."/>
            <person name="Lehrach H."/>
            <person name="Jacob H.J."/>
            <person name="Bromberg S."/>
            <person name="Gullings-Handley J."/>
            <person name="Jensen-Seaman M.I."/>
            <person name="Kwitek A.E."/>
            <person name="Lazar J."/>
            <person name="Pasko D."/>
            <person name="Tonellato P.J."/>
            <person name="Twigger S."/>
            <person name="Ponting C.P."/>
            <person name="Duarte J.M."/>
            <person name="Rice S."/>
            <person name="Goodstadt L."/>
            <person name="Beatson S.A."/>
            <person name="Emes R.D."/>
            <person name="Winter E.E."/>
            <person name="Webber C."/>
            <person name="Brandt P."/>
            <person name="Nyakatura G."/>
            <person name="Adetobi M."/>
            <person name="Chiaromonte F."/>
            <person name="Elnitski L."/>
            <person name="Eswara P."/>
            <person name="Hardison R.C."/>
            <person name="Hou M."/>
            <person name="Kolbe D."/>
            <person name="Makova K."/>
            <person name="Miller W."/>
            <person name="Nekrutenko A."/>
            <person name="Riemer C."/>
            <person name="Schwartz S."/>
            <person name="Taylor J."/>
            <person name="Yang S."/>
            <person name="Zhang Y."/>
            <person name="Lindpaintner K."/>
            <person name="Andrews T.D."/>
            <person name="Caccamo M."/>
            <person name="Clamp M."/>
            <person name="Clarke L."/>
            <person name="Curwen V."/>
            <person name="Durbin R.M."/>
            <person name="Eyras E."/>
            <person name="Searle S.M."/>
            <person name="Cooper G.M."/>
            <person name="Batzoglou S."/>
            <person name="Brudno M."/>
            <person name="Sidow A."/>
            <person name="Stone E.A."/>
            <person name="Payseur B.A."/>
            <person name="Bourque G."/>
            <person name="Lopez-Otin C."/>
            <person name="Puente X.S."/>
            <person name="Chakrabarti K."/>
            <person name="Chatterji S."/>
            <person name="Dewey C."/>
            <person name="Pachter L."/>
            <person name="Bray N."/>
            <person name="Yap V.B."/>
            <person name="Caspi A."/>
            <person name="Tesler G."/>
            <person name="Pevzner P.A."/>
            <person name="Haussler D."/>
            <person name="Roskin K.M."/>
            <person name="Baertsch R."/>
            <person name="Clawson H."/>
            <person name="Furey T.S."/>
            <person name="Hinrichs A.S."/>
            <person name="Karolchik D."/>
            <person name="Kent W.J."/>
            <person name="Rosenbloom K.R."/>
            <person name="Trumbower H."/>
            <person name="Weirauch M."/>
            <person name="Cooper D.N."/>
            <person name="Stenson P.D."/>
            <person name="Ma B."/>
            <person name="Brent M."/>
            <person name="Arumugam M."/>
            <person name="Shteynberg D."/>
            <person name="Copley R.R."/>
            <person name="Taylor M.S."/>
            <person name="Riethman H."/>
            <person name="Mudunuri U."/>
            <person name="Peterson J."/>
            <person name="Guyer M."/>
            <person name="Felsenfeld A."/>
            <person name="Old S."/>
            <person name="Mockrin S."/>
            <person name="Collins F.S."/>
        </authorList>
    </citation>
    <scope>NUCLEOTIDE SEQUENCE [LARGE SCALE GENOMIC DNA]</scope>
    <source>
        <strain>Brown Norway</strain>
    </source>
</reference>
<reference evidence="6" key="2">
    <citation type="submission" date="2005-09" db="EMBL/GenBank/DDBJ databases">
        <authorList>
            <person name="Mural R.J."/>
            <person name="Li P.W."/>
            <person name="Adams M.D."/>
            <person name="Amanatides P.G."/>
            <person name="Baden-Tillson H."/>
            <person name="Barnstead M."/>
            <person name="Chin S.H."/>
            <person name="Dew I."/>
            <person name="Evans C.A."/>
            <person name="Ferriera S."/>
            <person name="Flanigan M."/>
            <person name="Fosler C."/>
            <person name="Glodek A."/>
            <person name="Gu Z."/>
            <person name="Holt R.A."/>
            <person name="Jennings D."/>
            <person name="Kraft C.L."/>
            <person name="Lu F."/>
            <person name="Nguyen T."/>
            <person name="Nusskern D.R."/>
            <person name="Pfannkoch C.M."/>
            <person name="Sitter C."/>
            <person name="Sutton G.G."/>
            <person name="Venter J.C."/>
            <person name="Wang Z."/>
            <person name="Woodage T."/>
            <person name="Zheng X.H."/>
            <person name="Zhong F."/>
        </authorList>
    </citation>
    <scope>NUCLEOTIDE SEQUENCE [LARGE SCALE GENOMIC DNA]</scope>
</reference>
<reference evidence="5" key="3">
    <citation type="journal article" date="2004" name="Genome Res.">
        <title>The status, quality, and expansion of the NIH full-length cDNA project: the Mammalian Gene Collection (MGC).</title>
        <authorList>
            <consortium name="The MGC Project Team"/>
        </authorList>
    </citation>
    <scope>NUCLEOTIDE SEQUENCE [LARGE SCALE MRNA]</scope>
    <source>
        <tissue evidence="5">Testis</tissue>
    </source>
</reference>
<organism>
    <name type="scientific">Rattus norvegicus</name>
    <name type="common">Rat</name>
    <dbReference type="NCBI Taxonomy" id="10116"/>
    <lineage>
        <taxon>Eukaryota</taxon>
        <taxon>Metazoa</taxon>
        <taxon>Chordata</taxon>
        <taxon>Craniata</taxon>
        <taxon>Vertebrata</taxon>
        <taxon>Euteleostomi</taxon>
        <taxon>Mammalia</taxon>
        <taxon>Eutheria</taxon>
        <taxon>Euarchontoglires</taxon>
        <taxon>Glires</taxon>
        <taxon>Rodentia</taxon>
        <taxon>Myomorpha</taxon>
        <taxon>Muroidea</taxon>
        <taxon>Muridae</taxon>
        <taxon>Murinae</taxon>
        <taxon>Rattus</taxon>
    </lineage>
</organism>
<sequence>MATLGCAPKDDGEGKDEGGSDRGDGDPKPKGKKEVEAHTRREADERAVRIPIPEVLQQRLADDCYYINRRRRLVRLPCQTNVGAILECYVRHFSASALASGDRRPQPQRAAPERSVGLCREMADGLRITFDHALPLVLLYPQEQAQYEMVTSSTFFFPTEERASDAGRSQEAPWPGPSPPQPSESQAMAGPTAPKRRRVETDAARAPRRSTRHSTHCHWQAEDRASPQAKRSVPKLFPHLQKTPVHSTALSPIALTPGKEGSAMFAGFEGTTEEINEILSWKLVPDNYPPGHQPPPPSYIYGAQHLLRLFVKLPEILGKMSFSEKNLKALLKHLDLFLRFLAEYQADFFLESAYVSACEAHYSSKNPRTIC</sequence>
<feature type="chain" id="PRO_0000460407" description="MSL complex subunit 3B">
    <location>
        <begin position="1"/>
        <end position="371"/>
    </location>
</feature>
<feature type="domain" description="MRG" evidence="3">
    <location>
        <begin position="44"/>
        <end position="367"/>
    </location>
</feature>
<feature type="region of interest" description="Disordered" evidence="4">
    <location>
        <begin position="1"/>
        <end position="44"/>
    </location>
</feature>
<feature type="region of interest" description="Disordered" evidence="4">
    <location>
        <begin position="160"/>
        <end position="229"/>
    </location>
</feature>
<feature type="compositionally biased region" description="Basic and acidic residues" evidence="4">
    <location>
        <begin position="8"/>
        <end position="44"/>
    </location>
</feature>
<feature type="compositionally biased region" description="Basic residues" evidence="4">
    <location>
        <begin position="206"/>
        <end position="216"/>
    </location>
</feature>
<dbReference type="EMBL" id="AABR07045196">
    <property type="status" value="NOT_ANNOTATED_CDS"/>
    <property type="molecule type" value="Genomic_DNA"/>
</dbReference>
<dbReference type="EMBL" id="CH474016">
    <property type="protein sequence ID" value="EDL92916.1"/>
    <property type="molecule type" value="Genomic_DNA"/>
</dbReference>
<dbReference type="EMBL" id="BC079056">
    <property type="protein sequence ID" value="AAH79056.1"/>
    <property type="molecule type" value="mRNA"/>
</dbReference>
<dbReference type="RefSeq" id="NP_001014054.1">
    <property type="nucleotide sequence ID" value="NM_001014032.1"/>
</dbReference>
<dbReference type="RefSeq" id="XP_006256566.1">
    <property type="nucleotide sequence ID" value="XM_006256504.3"/>
</dbReference>
<dbReference type="SMR" id="Q6AYG1"/>
<dbReference type="FunCoup" id="Q6AYG1">
    <property type="interactions" value="264"/>
</dbReference>
<dbReference type="STRING" id="10116.ENSRNOP00000001050"/>
<dbReference type="GlyGen" id="Q6AYG1">
    <property type="glycosylation" value="1 site"/>
</dbReference>
<dbReference type="PhosphoSitePlus" id="Q6AYG1"/>
<dbReference type="PaxDb" id="10116-ENSRNOP00000001050"/>
<dbReference type="Ensembl" id="ENSRNOT00000001050.6">
    <property type="protein sequence ID" value="ENSRNOP00000001050.4"/>
    <property type="gene ID" value="ENSRNOG00000000801.6"/>
</dbReference>
<dbReference type="Ensembl" id="ENSRNOT00000108572.1">
    <property type="protein sequence ID" value="ENSRNOP00000084061.1"/>
    <property type="gene ID" value="ENSRNOG00000000801.6"/>
</dbReference>
<dbReference type="GeneID" id="309790"/>
<dbReference type="KEGG" id="rno:309790"/>
<dbReference type="UCSC" id="RGD:1308699">
    <property type="organism name" value="rat"/>
</dbReference>
<dbReference type="AGR" id="RGD:1308699"/>
<dbReference type="CTD" id="73390"/>
<dbReference type="RGD" id="1308699">
    <property type="gene designation" value="Msl3l2"/>
</dbReference>
<dbReference type="eggNOG" id="KOG3001">
    <property type="taxonomic scope" value="Eukaryota"/>
</dbReference>
<dbReference type="GeneTree" id="ENSGT00950000182965"/>
<dbReference type="HOGENOM" id="CLU_039566_5_2_1"/>
<dbReference type="OMA" id="CYNINRR"/>
<dbReference type="OrthoDB" id="10044771at2759"/>
<dbReference type="TreeFam" id="TF323400"/>
<dbReference type="Proteomes" id="UP000002494">
    <property type="component" value="Chromosome 20"/>
</dbReference>
<dbReference type="Proteomes" id="UP000234681">
    <property type="component" value="Chromosome 20"/>
</dbReference>
<dbReference type="Bgee" id="ENSRNOG00000000801">
    <property type="expression patterns" value="Expressed in testis and 19 other cell types or tissues"/>
</dbReference>
<dbReference type="GO" id="GO:0072487">
    <property type="term" value="C:MSL complex"/>
    <property type="evidence" value="ECO:0000318"/>
    <property type="project" value="GO_Central"/>
</dbReference>
<dbReference type="GO" id="GO:0035267">
    <property type="term" value="C:NuA4 histone acetyltransferase complex"/>
    <property type="evidence" value="ECO:0000318"/>
    <property type="project" value="GO_Central"/>
</dbReference>
<dbReference type="GO" id="GO:0005634">
    <property type="term" value="C:nucleus"/>
    <property type="evidence" value="ECO:0007669"/>
    <property type="project" value="UniProtKB-SubCell"/>
</dbReference>
<dbReference type="GO" id="GO:0006325">
    <property type="term" value="P:chromatin organization"/>
    <property type="evidence" value="ECO:0007669"/>
    <property type="project" value="UniProtKB-KW"/>
</dbReference>
<dbReference type="GO" id="GO:0006355">
    <property type="term" value="P:regulation of DNA-templated transcription"/>
    <property type="evidence" value="ECO:0007669"/>
    <property type="project" value="InterPro"/>
</dbReference>
<dbReference type="FunFam" id="1.10.274.30:FF:000002">
    <property type="entry name" value="male-specific lethal 3 homolog"/>
    <property type="match status" value="1"/>
</dbReference>
<dbReference type="Gene3D" id="1.10.274.30">
    <property type="entry name" value="MRG domain"/>
    <property type="match status" value="2"/>
</dbReference>
<dbReference type="InterPro" id="IPR008676">
    <property type="entry name" value="MRG"/>
</dbReference>
<dbReference type="InterPro" id="IPR038217">
    <property type="entry name" value="MRG_C_sf"/>
</dbReference>
<dbReference type="InterPro" id="IPR026541">
    <property type="entry name" value="MRG_dom"/>
</dbReference>
<dbReference type="PANTHER" id="PTHR10880">
    <property type="entry name" value="MORTALITY FACTOR 4-LIKE PROTEIN"/>
    <property type="match status" value="1"/>
</dbReference>
<dbReference type="PANTHER" id="PTHR10880:SF46">
    <property type="entry name" value="MSL3 LIKE 2"/>
    <property type="match status" value="1"/>
</dbReference>
<dbReference type="Pfam" id="PF05712">
    <property type="entry name" value="MRG"/>
    <property type="match status" value="1"/>
</dbReference>
<dbReference type="PROSITE" id="PS51640">
    <property type="entry name" value="MRG"/>
    <property type="match status" value="1"/>
</dbReference>
<accession>Q6AYG1</accession>
<accession>A0A8I5ZYM3</accession>
<accession>A6K4A8</accession>
<proteinExistence type="evidence at transcript level"/>
<protein>
    <recommendedName>
        <fullName evidence="1">MSL complex subunit 3B</fullName>
    </recommendedName>
    <alternativeName>
        <fullName>Male-specific lethal-3 homolog 2</fullName>
    </alternativeName>
    <alternativeName>
        <fullName>Male-specific lethal-3 protein-like 2</fullName>
        <shortName>MSL3-like 2</shortName>
    </alternativeName>
</protein>
<comment type="function">
    <text evidence="2">Probable non-catalytic component of the MSL histone acetyltransferase complex, a multiprotein complex that mediates the majority of histone H4 acetylation at 'Lys-16' (H4K16ac), an epigenetic mark that prevents chromatin compaction.</text>
</comment>
<comment type="subcellular location">
    <subcellularLocation>
        <location evidence="3">Nucleus</location>
    </subcellularLocation>
</comment>
<keyword id="KW-0156">Chromatin regulator</keyword>
<keyword id="KW-0539">Nucleus</keyword>
<keyword id="KW-1185">Reference proteome</keyword>
<keyword id="KW-0804">Transcription</keyword>
<keyword id="KW-0805">Transcription regulation</keyword>
<evidence type="ECO:0000250" key="1">
    <source>
        <dbReference type="UniProtKB" id="P0C860"/>
    </source>
</evidence>
<evidence type="ECO:0000250" key="2">
    <source>
        <dbReference type="UniProtKB" id="Q8N5Y2"/>
    </source>
</evidence>
<evidence type="ECO:0000255" key="3">
    <source>
        <dbReference type="PROSITE-ProRule" id="PRU00972"/>
    </source>
</evidence>
<evidence type="ECO:0000256" key="4">
    <source>
        <dbReference type="SAM" id="MobiDB-lite"/>
    </source>
</evidence>
<evidence type="ECO:0000312" key="5">
    <source>
        <dbReference type="EMBL" id="AAH79056.1"/>
    </source>
</evidence>
<evidence type="ECO:0000312" key="6">
    <source>
        <dbReference type="EMBL" id="EDL92916.1"/>
    </source>
</evidence>
<evidence type="ECO:0000312" key="7">
    <source>
        <dbReference type="RGD" id="1308699"/>
    </source>
</evidence>
<name>MS3L2_RAT</name>
<gene>
    <name evidence="1" type="primary">Msl3b</name>
    <name evidence="7" type="synonym">Msl3l2</name>
</gene>